<sequence length="283" mass="31325">MTDTLSDYVDCTPLLDDREALDRFYDEHGYVYLRGALDRELVRTAAEQMLEGLIALGHADPATTLDTLTIDSFEAVDEVAMHDYVKYDDLWNHPSTLKVWEKVLGEPVFVFKSTTIRYYPSAAGSAEPSFLTPLHQDGFYIGPNKDFRTAWIPLLPTSHGIGGVAVADGSHKKGPREHVVTEQFRRFGHAVRGIPAEEFGTDEQLLFSPMEPGDVLIFHAFMCHKSIPNVSANPAGMRMSMDTRIQPASSHRGFNALTPWPESAKDASKGILSKITGTPTTAE</sequence>
<organism>
    <name type="scientific">Streptomyces exfoliatus</name>
    <name type="common">Streptomyces hydrogenans</name>
    <dbReference type="NCBI Taxonomy" id="1905"/>
    <lineage>
        <taxon>Bacteria</taxon>
        <taxon>Bacillati</taxon>
        <taxon>Actinomycetota</taxon>
        <taxon>Actinomycetes</taxon>
        <taxon>Kitasatosporales</taxon>
        <taxon>Streptomycetaceae</taxon>
        <taxon>Streptomyces</taxon>
    </lineage>
</organism>
<gene>
    <name type="primary">penH</name>
</gene>
<accession>E3VWK0</accession>
<name>PENH_STREX</name>
<dbReference type="EC" id="1.14.11.35"/>
<dbReference type="EMBL" id="HQ292066">
    <property type="protein sequence ID" value="ADO85588.1"/>
    <property type="molecule type" value="Genomic_DNA"/>
</dbReference>
<dbReference type="SMR" id="E3VWK0"/>
<dbReference type="UniPathway" id="UPA00974"/>
<dbReference type="GO" id="GO:0016706">
    <property type="term" value="F:2-oxoglutarate-dependent dioxygenase activity"/>
    <property type="evidence" value="ECO:0007669"/>
    <property type="project" value="UniProtKB-ARBA"/>
</dbReference>
<dbReference type="GO" id="GO:0005506">
    <property type="term" value="F:iron ion binding"/>
    <property type="evidence" value="ECO:0007669"/>
    <property type="project" value="UniProtKB-ARBA"/>
</dbReference>
<dbReference type="GO" id="GO:0031418">
    <property type="term" value="F:L-ascorbic acid binding"/>
    <property type="evidence" value="ECO:0007669"/>
    <property type="project" value="UniProtKB-KW"/>
</dbReference>
<dbReference type="GO" id="GO:0017000">
    <property type="term" value="P:antibiotic biosynthetic process"/>
    <property type="evidence" value="ECO:0007669"/>
    <property type="project" value="UniProtKB-KW"/>
</dbReference>
<dbReference type="Gene3D" id="2.60.120.620">
    <property type="entry name" value="q2cbj1_9rhob like domain"/>
    <property type="match status" value="1"/>
</dbReference>
<dbReference type="InterPro" id="IPR054971">
    <property type="entry name" value="DxPntBtaHylase"/>
</dbReference>
<dbReference type="InterPro" id="IPR008775">
    <property type="entry name" value="Phytyl_CoA_dOase-like"/>
</dbReference>
<dbReference type="NCBIfam" id="NF045813">
    <property type="entry name" value="DxPntBtaHylase"/>
    <property type="match status" value="1"/>
</dbReference>
<dbReference type="PANTHER" id="PTHR20883:SF48">
    <property type="entry name" value="ECTOINE DIOXYGENASE"/>
    <property type="match status" value="1"/>
</dbReference>
<dbReference type="PANTHER" id="PTHR20883">
    <property type="entry name" value="PHYTANOYL-COA DIOXYGENASE DOMAIN CONTAINING 1"/>
    <property type="match status" value="1"/>
</dbReference>
<dbReference type="Pfam" id="PF05721">
    <property type="entry name" value="PhyH"/>
    <property type="match status" value="1"/>
</dbReference>
<dbReference type="SUPFAM" id="SSF51197">
    <property type="entry name" value="Clavaminate synthase-like"/>
    <property type="match status" value="1"/>
</dbReference>
<reference key="1">
    <citation type="journal article" date="2011" name="J. Am. Chem. Soc.">
        <title>Genome mining in streptomyces. Discovery of an unprecedented P450-catalyzed oxidative rearrangement that is the final step in the biosynthesis of pentalenolactone.</title>
        <authorList>
            <person name="Zhu D."/>
            <person name="Seo M.J."/>
            <person name="Ikeda H."/>
            <person name="Cane D.E."/>
        </authorList>
    </citation>
    <scope>NUCLEOTIDE SEQUENCE [GENOMIC DNA]</scope>
    <source>
        <strain>UC5319</strain>
    </source>
</reference>
<keyword id="KW-0045">Antibiotic biosynthesis</keyword>
<keyword id="KW-0223">Dioxygenase</keyword>
<keyword id="KW-0408">Iron</keyword>
<keyword id="KW-0479">Metal-binding</keyword>
<keyword id="KW-0560">Oxidoreductase</keyword>
<keyword id="KW-0847">Vitamin C</keyword>
<protein>
    <recommendedName>
        <fullName>1-deoxypentalenic acid 11-beta-hydroxylase</fullName>
        <ecNumber>1.14.11.35</ecNumber>
    </recommendedName>
    <alternativeName>
        <fullName>Pentalenolactone biosynthesis protein H</fullName>
    </alternativeName>
</protein>
<proteinExistence type="inferred from homology"/>
<feature type="chain" id="PRO_0000422002" description="1-deoxypentalenic acid 11-beta-hydroxylase">
    <location>
        <begin position="1"/>
        <end position="283"/>
    </location>
</feature>
<feature type="region of interest" description="Disordered" evidence="2">
    <location>
        <begin position="260"/>
        <end position="283"/>
    </location>
</feature>
<feature type="binding site" evidence="1">
    <location>
        <position position="117"/>
    </location>
    <ligand>
        <name>substrate</name>
    </ligand>
</feature>
<feature type="binding site" evidence="1">
    <location>
        <begin position="135"/>
        <end position="137"/>
    </location>
    <ligand>
        <name>2-oxoglutarate</name>
        <dbReference type="ChEBI" id="CHEBI:16810"/>
    </ligand>
</feature>
<feature type="binding site" evidence="1">
    <location>
        <position position="135"/>
    </location>
    <ligand>
        <name>Fe cation</name>
        <dbReference type="ChEBI" id="CHEBI:24875"/>
    </ligand>
</feature>
<feature type="binding site" evidence="1">
    <location>
        <position position="137"/>
    </location>
    <ligand>
        <name>Fe cation</name>
        <dbReference type="ChEBI" id="CHEBI:24875"/>
    </ligand>
</feature>
<feature type="binding site" evidence="1">
    <location>
        <position position="151"/>
    </location>
    <ligand>
        <name>2-oxoglutarate</name>
        <dbReference type="ChEBI" id="CHEBI:16810"/>
    </ligand>
</feature>
<feature type="binding site" evidence="1">
    <location>
        <position position="186"/>
    </location>
    <ligand>
        <name>substrate</name>
    </ligand>
</feature>
<feature type="binding site" evidence="1">
    <location>
        <position position="224"/>
    </location>
    <ligand>
        <name>Fe cation</name>
        <dbReference type="ChEBI" id="CHEBI:24875"/>
    </ligand>
</feature>
<feature type="binding site" evidence="1">
    <location>
        <position position="226"/>
    </location>
    <ligand>
        <name>2-oxoglutarate</name>
        <dbReference type="ChEBI" id="CHEBI:16810"/>
    </ligand>
</feature>
<feature type="binding site" evidence="1">
    <location>
        <position position="238"/>
    </location>
    <ligand>
        <name>2-oxoglutarate</name>
        <dbReference type="ChEBI" id="CHEBI:16810"/>
    </ligand>
</feature>
<evidence type="ECO:0000250" key="1"/>
<evidence type="ECO:0000256" key="2">
    <source>
        <dbReference type="SAM" id="MobiDB-lite"/>
    </source>
</evidence>
<evidence type="ECO:0000305" key="3"/>
<comment type="function">
    <text evidence="1">Catalyzes the conversion of 1-deoxypentalenic acid to 11-beta-hydroxy-1-deoxypentalenic acid in the biosynthesis of pentalenolactone antibiotic.</text>
</comment>
<comment type="catalytic activity">
    <reaction>
        <text>1-deoxypentalenate + 2-oxoglutarate + O2 = 1-deoxy-11beta-hydroxypentalenate + succinate + CO2</text>
        <dbReference type="Rhea" id="RHEA:34619"/>
        <dbReference type="ChEBI" id="CHEBI:15379"/>
        <dbReference type="ChEBI" id="CHEBI:16526"/>
        <dbReference type="ChEBI" id="CHEBI:16810"/>
        <dbReference type="ChEBI" id="CHEBI:30031"/>
        <dbReference type="ChEBI" id="CHEBI:68650"/>
        <dbReference type="ChEBI" id="CHEBI:70779"/>
        <dbReference type="EC" id="1.14.11.35"/>
    </reaction>
</comment>
<comment type="cofactor">
    <cofactor evidence="1">
        <name>Fe cation</name>
        <dbReference type="ChEBI" id="CHEBI:24875"/>
    </cofactor>
</comment>
<comment type="cofactor">
    <cofactor evidence="1">
        <name>L-ascorbate</name>
        <dbReference type="ChEBI" id="CHEBI:38290"/>
    </cofactor>
</comment>
<comment type="pathway">
    <text>Antibiotic biosynthesis; pentalenolactone biosynthesis.</text>
</comment>
<comment type="similarity">
    <text evidence="3">Belongs to the PhyH family.</text>
</comment>